<protein>
    <recommendedName>
        <fullName>Pre-mRNA-splicing ATP-dependent RNA helicase prp28</fullName>
        <ecNumber>3.6.4.13</ecNumber>
    </recommendedName>
</protein>
<feature type="chain" id="PRO_0000310208" description="Pre-mRNA-splicing ATP-dependent RNA helicase prp28">
    <location>
        <begin position="1"/>
        <end position="816"/>
    </location>
</feature>
<feature type="domain" description="Helicase ATP-binding" evidence="2">
    <location>
        <begin position="410"/>
        <end position="613"/>
    </location>
</feature>
<feature type="domain" description="Helicase C-terminal" evidence="3">
    <location>
        <begin position="624"/>
        <end position="787"/>
    </location>
</feature>
<feature type="region of interest" description="Disordered" evidence="4">
    <location>
        <begin position="1"/>
        <end position="106"/>
    </location>
</feature>
<feature type="region of interest" description="Disordered" evidence="4">
    <location>
        <begin position="118"/>
        <end position="227"/>
    </location>
</feature>
<feature type="region of interest" description="Disordered" evidence="4">
    <location>
        <begin position="781"/>
        <end position="816"/>
    </location>
</feature>
<feature type="short sequence motif" description="Q motif">
    <location>
        <begin position="379"/>
        <end position="407"/>
    </location>
</feature>
<feature type="short sequence motif" description="DEAD box">
    <location>
        <begin position="536"/>
        <end position="539"/>
    </location>
</feature>
<feature type="compositionally biased region" description="Pro residues" evidence="4">
    <location>
        <begin position="24"/>
        <end position="67"/>
    </location>
</feature>
<feature type="compositionally biased region" description="Basic and acidic residues" evidence="4">
    <location>
        <begin position="87"/>
        <end position="100"/>
    </location>
</feature>
<feature type="compositionally biased region" description="Basic and acidic residues" evidence="4">
    <location>
        <begin position="118"/>
        <end position="135"/>
    </location>
</feature>
<feature type="compositionally biased region" description="Basic and acidic residues" evidence="4">
    <location>
        <begin position="154"/>
        <end position="169"/>
    </location>
</feature>
<feature type="compositionally biased region" description="Low complexity" evidence="4">
    <location>
        <begin position="202"/>
        <end position="217"/>
    </location>
</feature>
<feature type="compositionally biased region" description="Gly residues" evidence="4">
    <location>
        <begin position="805"/>
        <end position="816"/>
    </location>
</feature>
<feature type="binding site" evidence="2">
    <location>
        <begin position="423"/>
        <end position="430"/>
    </location>
    <ligand>
        <name>ATP</name>
        <dbReference type="ChEBI" id="CHEBI:30616"/>
    </ligand>
</feature>
<organism>
    <name type="scientific">Sclerotinia sclerotiorum (strain ATCC 18683 / 1980 / Ss-1)</name>
    <name type="common">White mold</name>
    <name type="synonym">Whetzelinia sclerotiorum</name>
    <dbReference type="NCBI Taxonomy" id="665079"/>
    <lineage>
        <taxon>Eukaryota</taxon>
        <taxon>Fungi</taxon>
        <taxon>Dikarya</taxon>
        <taxon>Ascomycota</taxon>
        <taxon>Pezizomycotina</taxon>
        <taxon>Leotiomycetes</taxon>
        <taxon>Helotiales</taxon>
        <taxon>Sclerotiniaceae</taxon>
        <taxon>Sclerotinia</taxon>
    </lineage>
</organism>
<evidence type="ECO:0000250" key="1"/>
<evidence type="ECO:0000255" key="2">
    <source>
        <dbReference type="PROSITE-ProRule" id="PRU00541"/>
    </source>
</evidence>
<evidence type="ECO:0000255" key="3">
    <source>
        <dbReference type="PROSITE-ProRule" id="PRU00542"/>
    </source>
</evidence>
<evidence type="ECO:0000256" key="4">
    <source>
        <dbReference type="SAM" id="MobiDB-lite"/>
    </source>
</evidence>
<evidence type="ECO:0000305" key="5"/>
<comment type="function">
    <text evidence="1">ATP-dependent RNA helicase involved in mRNA splicing. May destabilize the U1/5' splice site duplex to permit an effective competition for the 5' splice site by the U6 snRNA, resulting in the switch between U1 and U6 at the 5' splice site. May also act to unwind the U4/U6 base-pairing interaction in the U4/U6/U5 snRNP, facilitating the first covalent step of splicing (By similarity).</text>
</comment>
<comment type="catalytic activity">
    <reaction>
        <text>ATP + H2O = ADP + phosphate + H(+)</text>
        <dbReference type="Rhea" id="RHEA:13065"/>
        <dbReference type="ChEBI" id="CHEBI:15377"/>
        <dbReference type="ChEBI" id="CHEBI:15378"/>
        <dbReference type="ChEBI" id="CHEBI:30616"/>
        <dbReference type="ChEBI" id="CHEBI:43474"/>
        <dbReference type="ChEBI" id="CHEBI:456216"/>
        <dbReference type="EC" id="3.6.4.13"/>
    </reaction>
</comment>
<comment type="subunit">
    <text evidence="1">Component of the U5 snRNP complex.</text>
</comment>
<comment type="subcellular location">
    <subcellularLocation>
        <location evidence="1">Cytoplasm</location>
    </subcellularLocation>
    <subcellularLocation>
        <location evidence="1">Nucleus</location>
    </subcellularLocation>
</comment>
<comment type="domain">
    <text>The Q motif is unique to and characteristic of the DEAD box family of RNA helicases and controls ATP binding and hydrolysis.</text>
</comment>
<comment type="similarity">
    <text evidence="5">Belongs to the DEAD box helicase family. DDX23/PRP28 subfamily.</text>
</comment>
<reference key="1">
    <citation type="journal article" date="2011" name="PLoS Genet.">
        <title>Genomic analysis of the necrotrophic fungal pathogens Sclerotinia sclerotiorum and Botrytis cinerea.</title>
        <authorList>
            <person name="Amselem J."/>
            <person name="Cuomo C.A."/>
            <person name="van Kan J.A.L."/>
            <person name="Viaud M."/>
            <person name="Benito E.P."/>
            <person name="Couloux A."/>
            <person name="Coutinho P.M."/>
            <person name="de Vries R.P."/>
            <person name="Dyer P.S."/>
            <person name="Fillinger S."/>
            <person name="Fournier E."/>
            <person name="Gout L."/>
            <person name="Hahn M."/>
            <person name="Kohn L."/>
            <person name="Lapalu N."/>
            <person name="Plummer K.M."/>
            <person name="Pradier J.-M."/>
            <person name="Quevillon E."/>
            <person name="Sharon A."/>
            <person name="Simon A."/>
            <person name="ten Have A."/>
            <person name="Tudzynski B."/>
            <person name="Tudzynski P."/>
            <person name="Wincker P."/>
            <person name="Andrew M."/>
            <person name="Anthouard V."/>
            <person name="Beever R.E."/>
            <person name="Beffa R."/>
            <person name="Benoit I."/>
            <person name="Bouzid O."/>
            <person name="Brault B."/>
            <person name="Chen Z."/>
            <person name="Choquer M."/>
            <person name="Collemare J."/>
            <person name="Cotton P."/>
            <person name="Danchin E.G."/>
            <person name="Da Silva C."/>
            <person name="Gautier A."/>
            <person name="Giraud C."/>
            <person name="Giraud T."/>
            <person name="Gonzalez C."/>
            <person name="Grossetete S."/>
            <person name="Gueldener U."/>
            <person name="Henrissat B."/>
            <person name="Howlett B.J."/>
            <person name="Kodira C."/>
            <person name="Kretschmer M."/>
            <person name="Lappartient A."/>
            <person name="Leroch M."/>
            <person name="Levis C."/>
            <person name="Mauceli E."/>
            <person name="Neuveglise C."/>
            <person name="Oeser B."/>
            <person name="Pearson M."/>
            <person name="Poulain J."/>
            <person name="Poussereau N."/>
            <person name="Quesneville H."/>
            <person name="Rascle C."/>
            <person name="Schumacher J."/>
            <person name="Segurens B."/>
            <person name="Sexton A."/>
            <person name="Silva E."/>
            <person name="Sirven C."/>
            <person name="Soanes D.M."/>
            <person name="Talbot N.J."/>
            <person name="Templeton M."/>
            <person name="Yandava C."/>
            <person name="Yarden O."/>
            <person name="Zeng Q."/>
            <person name="Rollins J.A."/>
            <person name="Lebrun M.-H."/>
            <person name="Dickman M."/>
        </authorList>
    </citation>
    <scope>NUCLEOTIDE SEQUENCE [LARGE SCALE GENOMIC DNA]</scope>
    <source>
        <strain>ATCC 18683 / 1980 / Ss-1</strain>
    </source>
</reference>
<name>PRP28_SCLS1</name>
<sequence length="816" mass="89525">MASNGYLNSIDAVPPPLIDSDGRPPSPPPPPPDSFVPPPPPSSLAPPPPPSSDLPPPPPSELQPPPPEPKKKKGWGAPKPGPLSIEDILKKKKEADEAAAKPKFLSKAAREKLALEKRAKEVEEQRRKRESEQDNRIPVGTVNGNGYGAANGRDGYERSHQQDNARRDSSFVPTGPRAMRNGQQNRPSSDKPNDMEPPPKSAKPATTAAGSSKASVAGEKRPANAEDLQAALIRTRYMGAETNQSTFSAKKKRRRTTEKKFNFEWNAEEDTSPDYNPIYQNRAEAGLYGRGRLAGFAEDEAATLKYAKALEERDIEAGSARAREIVEMERRRKEDAGRNSLDKHWSEKKLEHMRERDWRIFKEDFNISTKGGAIPNPMRSWSESKLPKRLLDVINQVGYDEPSAVQRAAIPIALQARDLIGVAVTGSGKTAAFLLPLLVYISELPPLNEFTKNDGPYAIILAPTRELAQQIEVEAKKFATPLGFTCVSIVGGHSLEEQSYNLRNGAEIIIATPGRLVDCIERRVLVLGQCCYIIMDEADRMIDLGFEESVNKILDALPVSNEKPDTDDAEDAQAMSRHLGGKDRYRQTMMYTATMPPAVEKIAKKYLRRPAIVTIGNIGEAVETVEQRVEFVAGEDKRKKRLNEILASGEFQPPIIVFVNIKRNCDAVARDIKHMGFTSVTLHGSKTQEQREAALASVRSGATNVLVATDLAGRGIDVPDVSLVVNFNMATNIESYTHRIGRTGRAGKSGVAITFLGNEDADTMYDLKQMLMKSSISRVPEELRKHEAAQQKSQRGQGLKKIEEGGFGGKGGAGGC</sequence>
<keyword id="KW-0067">ATP-binding</keyword>
<keyword id="KW-0963">Cytoplasm</keyword>
<keyword id="KW-0347">Helicase</keyword>
<keyword id="KW-0378">Hydrolase</keyword>
<keyword id="KW-0507">mRNA processing</keyword>
<keyword id="KW-0508">mRNA splicing</keyword>
<keyword id="KW-0547">Nucleotide-binding</keyword>
<keyword id="KW-0539">Nucleus</keyword>
<keyword id="KW-1185">Reference proteome</keyword>
<accession>A7EGG4</accession>
<gene>
    <name type="primary">prp28</name>
    <name type="ORF">SS1G_04405</name>
</gene>
<dbReference type="EC" id="3.6.4.13"/>
<dbReference type="EMBL" id="CH476625">
    <property type="protein sequence ID" value="EDO01930.1"/>
    <property type="molecule type" value="Genomic_DNA"/>
</dbReference>
<dbReference type="RefSeq" id="XP_001594598.1">
    <property type="nucleotide sequence ID" value="XM_001594548.1"/>
</dbReference>
<dbReference type="SMR" id="A7EGG4"/>
<dbReference type="FunCoup" id="A7EGG4">
    <property type="interactions" value="849"/>
</dbReference>
<dbReference type="STRING" id="665079.A7EGG4"/>
<dbReference type="EnsemblFungi" id="EDO01930">
    <property type="protein sequence ID" value="EDO01930"/>
    <property type="gene ID" value="SS1G_04405"/>
</dbReference>
<dbReference type="GeneID" id="5491199"/>
<dbReference type="KEGG" id="ssl:SS1G_04405"/>
<dbReference type="eggNOG" id="KOG0333">
    <property type="taxonomic scope" value="Eukaryota"/>
</dbReference>
<dbReference type="HOGENOM" id="CLU_003041_11_3_1"/>
<dbReference type="InParanoid" id="A7EGG4"/>
<dbReference type="OMA" id="ARDIKHM"/>
<dbReference type="Proteomes" id="UP000001312">
    <property type="component" value="Unassembled WGS sequence"/>
</dbReference>
<dbReference type="GO" id="GO:0071013">
    <property type="term" value="C:catalytic step 2 spliceosome"/>
    <property type="evidence" value="ECO:0000318"/>
    <property type="project" value="GO_Central"/>
</dbReference>
<dbReference type="GO" id="GO:0005737">
    <property type="term" value="C:cytoplasm"/>
    <property type="evidence" value="ECO:0007669"/>
    <property type="project" value="UniProtKB-SubCell"/>
</dbReference>
<dbReference type="GO" id="GO:0005524">
    <property type="term" value="F:ATP binding"/>
    <property type="evidence" value="ECO:0007669"/>
    <property type="project" value="UniProtKB-KW"/>
</dbReference>
<dbReference type="GO" id="GO:0016887">
    <property type="term" value="F:ATP hydrolysis activity"/>
    <property type="evidence" value="ECO:0007669"/>
    <property type="project" value="RHEA"/>
</dbReference>
<dbReference type="GO" id="GO:0003729">
    <property type="term" value="F:mRNA binding"/>
    <property type="evidence" value="ECO:0000318"/>
    <property type="project" value="GO_Central"/>
</dbReference>
<dbReference type="GO" id="GO:0003724">
    <property type="term" value="F:RNA helicase activity"/>
    <property type="evidence" value="ECO:0007669"/>
    <property type="project" value="UniProtKB-EC"/>
</dbReference>
<dbReference type="GO" id="GO:0000398">
    <property type="term" value="P:mRNA splicing, via spliceosome"/>
    <property type="evidence" value="ECO:0000318"/>
    <property type="project" value="GO_Central"/>
</dbReference>
<dbReference type="CDD" id="cd17945">
    <property type="entry name" value="DEADc_DDX23"/>
    <property type="match status" value="1"/>
</dbReference>
<dbReference type="CDD" id="cd18787">
    <property type="entry name" value="SF2_C_DEAD"/>
    <property type="match status" value="1"/>
</dbReference>
<dbReference type="FunFam" id="3.40.50.300:FF:000322">
    <property type="entry name" value="probable ATP-dependent RNA helicase DDX23"/>
    <property type="match status" value="1"/>
</dbReference>
<dbReference type="Gene3D" id="3.40.50.300">
    <property type="entry name" value="P-loop containing nucleotide triphosphate hydrolases"/>
    <property type="match status" value="2"/>
</dbReference>
<dbReference type="InterPro" id="IPR011545">
    <property type="entry name" value="DEAD/DEAH_box_helicase_dom"/>
</dbReference>
<dbReference type="InterPro" id="IPR014001">
    <property type="entry name" value="Helicase_ATP-bd"/>
</dbReference>
<dbReference type="InterPro" id="IPR001650">
    <property type="entry name" value="Helicase_C-like"/>
</dbReference>
<dbReference type="InterPro" id="IPR027417">
    <property type="entry name" value="P-loop_NTPase"/>
</dbReference>
<dbReference type="InterPro" id="IPR000629">
    <property type="entry name" value="RNA-helicase_DEAD-box_CS"/>
</dbReference>
<dbReference type="InterPro" id="IPR014014">
    <property type="entry name" value="RNA_helicase_DEAD_Q_motif"/>
</dbReference>
<dbReference type="PANTHER" id="PTHR47958">
    <property type="entry name" value="ATP-DEPENDENT RNA HELICASE DBP3"/>
    <property type="match status" value="1"/>
</dbReference>
<dbReference type="Pfam" id="PF25430">
    <property type="entry name" value="DDX23"/>
    <property type="match status" value="1"/>
</dbReference>
<dbReference type="Pfam" id="PF00270">
    <property type="entry name" value="DEAD"/>
    <property type="match status" value="1"/>
</dbReference>
<dbReference type="Pfam" id="PF00271">
    <property type="entry name" value="Helicase_C"/>
    <property type="match status" value="1"/>
</dbReference>
<dbReference type="SMART" id="SM00487">
    <property type="entry name" value="DEXDc"/>
    <property type="match status" value="1"/>
</dbReference>
<dbReference type="SMART" id="SM00490">
    <property type="entry name" value="HELICc"/>
    <property type="match status" value="1"/>
</dbReference>
<dbReference type="SUPFAM" id="SSF52540">
    <property type="entry name" value="P-loop containing nucleoside triphosphate hydrolases"/>
    <property type="match status" value="1"/>
</dbReference>
<dbReference type="PROSITE" id="PS00039">
    <property type="entry name" value="DEAD_ATP_HELICASE"/>
    <property type="match status" value="1"/>
</dbReference>
<dbReference type="PROSITE" id="PS51192">
    <property type="entry name" value="HELICASE_ATP_BIND_1"/>
    <property type="match status" value="1"/>
</dbReference>
<dbReference type="PROSITE" id="PS51194">
    <property type="entry name" value="HELICASE_CTER"/>
    <property type="match status" value="1"/>
</dbReference>
<dbReference type="PROSITE" id="PS51195">
    <property type="entry name" value="Q_MOTIF"/>
    <property type="match status" value="1"/>
</dbReference>
<proteinExistence type="inferred from homology"/>